<organism>
    <name type="scientific">Ajellomyces capsulatus (strain H88)</name>
    <name type="common">Darling's disease fungus</name>
    <name type="synonym">Histoplasma capsulatum</name>
    <dbReference type="NCBI Taxonomy" id="544711"/>
    <lineage>
        <taxon>Eukaryota</taxon>
        <taxon>Fungi</taxon>
        <taxon>Dikarya</taxon>
        <taxon>Ascomycota</taxon>
        <taxon>Pezizomycotina</taxon>
        <taxon>Eurotiomycetes</taxon>
        <taxon>Eurotiomycetidae</taxon>
        <taxon>Onygenales</taxon>
        <taxon>Ajellomycetaceae</taxon>
        <taxon>Histoplasma</taxon>
    </lineage>
</organism>
<accession>F0U7H7</accession>
<name>DAPB_AJEC8</name>
<gene>
    <name type="primary">DAPB</name>
    <name type="ORF">HCEG_00116</name>
</gene>
<evidence type="ECO:0000250" key="1"/>
<evidence type="ECO:0000255" key="2"/>
<evidence type="ECO:0000256" key="3">
    <source>
        <dbReference type="SAM" id="MobiDB-lite"/>
    </source>
</evidence>
<evidence type="ECO:0000305" key="4"/>
<sequence length="917" mass="103412">MATEKGHGRDDEERVPLTRGSTEFRNSIDSFDYSSSTASLSLAVIDRINNSTQDAALGEKGPRDDDDDRYWDDDVEYDVEDADYIPSGGKPMHKSVKIALWTLLFLSLGGWSLAFVLFIFRSHDTYETPISSEDNISSGGLRGDRITLDDVLGEEWMPRHHFISWFPGPNGEDGLLLEKDGLGSTGYLRVEDIVSRKDTKSSKGSIVLMQKNTFTVGGETVICSQVWPSPDLKTVLVLSEKKQNWRHSFTGKYWLFDVDTQTGQPLDPAAQDQRIQLASWSPQSDAVVFTRDNNMFLRKLSSKEVTTITSDGGVDLFYGVPDWVYEEEVFSGNSATWWAHDGNYIAFLRTNESAVPEYPVQYFVSRPSGEDPNLGEENYPEVREIKYPKAGAPNPIVDLQFYDVRKGEIFSVDVADRFPDDYRLIIEVLWASNGKILVRETNRESDILIIAAIDVLSRTGKIVRKEDINALDGGWVEPTQSTRFIPADPSNGRPEDGYIDTVIHEGRDQLAYFTPLDNPKPLILTKGPSEIVNSPSGVDLKRGLVYFVVAGNEPWERHVYSVKFDGTALQPVTNVSESSYYDVSFSDGAGYALLNFQGPKVPWQKVISTPANENPFEEIIEQNNHLSRKLRLFSLESKVFQYINIDGFSLPVLERRPPNFDPTKKYPVLFYLYGGPGSQTVDKKFRVDFQSYVASTLGYIVVTVDGRGTGYIGRKSRSIVRGKLGHYEARDQIEVAKKWAAKPYVDESRMAIWGWSYGGFMTLKTIEEDGGRTFQYGMAVAPVTDWRYYDSIYAERYMHTPQHNPQGYDSSAISNTTALANNVRFLVMHGTADDNVHIQNTLTLLDKLDLANVDNYDVHVFPDSNHNINFHNAHKIVYTRLADWLVNAFNGQWLKTNNPTPNDSLFRRAATWAGLSI</sequence>
<comment type="function">
    <text evidence="1">Type IV dipeptidyl-peptidase which removes N-terminal dipeptides sequentially from polypeptides having unsubstituted N-termini provided that the penultimate residue is proline.</text>
</comment>
<comment type="catalytic activity">
    <reaction>
        <text>Release of an N-terminal dipeptide, Xaa-Yaa-|-Zaa-, from a polypeptide, preferentially when Yaa is Pro, provided Zaa is neither Pro nor hydroxyproline.</text>
        <dbReference type="EC" id="3.4.14.5"/>
    </reaction>
</comment>
<comment type="subcellular location">
    <subcellularLocation>
        <location evidence="1">Vacuole membrane</location>
        <topology evidence="1">Single-pass type II membrane protein</topology>
    </subcellularLocation>
    <text evidence="1">Lysosome-like vacuoles.</text>
</comment>
<comment type="similarity">
    <text evidence="4">Belongs to the peptidase S9B family.</text>
</comment>
<proteinExistence type="inferred from homology"/>
<keyword id="KW-0031">Aminopeptidase</keyword>
<keyword id="KW-0325">Glycoprotein</keyword>
<keyword id="KW-0378">Hydrolase</keyword>
<keyword id="KW-0472">Membrane</keyword>
<keyword id="KW-0645">Protease</keyword>
<keyword id="KW-1185">Reference proteome</keyword>
<keyword id="KW-0720">Serine protease</keyword>
<keyword id="KW-0735">Signal-anchor</keyword>
<keyword id="KW-0812">Transmembrane</keyword>
<keyword id="KW-1133">Transmembrane helix</keyword>
<keyword id="KW-0926">Vacuole</keyword>
<dbReference type="EC" id="3.4.14.5"/>
<dbReference type="EMBL" id="DS990636">
    <property type="protein sequence ID" value="EGC40754.1"/>
    <property type="molecule type" value="Genomic_DNA"/>
</dbReference>
<dbReference type="SMR" id="F0U7H7"/>
<dbReference type="STRING" id="544711.F0U7H7"/>
<dbReference type="ESTHER" id="ajecn-dapb">
    <property type="family name" value="DPP4N_Peptidase_S9"/>
</dbReference>
<dbReference type="GlyCosmos" id="F0U7H7">
    <property type="glycosylation" value="5 sites, No reported glycans"/>
</dbReference>
<dbReference type="VEuPathDB" id="FungiDB:I7I53_08556"/>
<dbReference type="HOGENOM" id="CLU_006105_0_1_1"/>
<dbReference type="OMA" id="MRTPQEN"/>
<dbReference type="OrthoDB" id="16520at2759"/>
<dbReference type="Proteomes" id="UP000008142">
    <property type="component" value="Unassembled WGS sequence"/>
</dbReference>
<dbReference type="GO" id="GO:0005886">
    <property type="term" value="C:plasma membrane"/>
    <property type="evidence" value="ECO:0007669"/>
    <property type="project" value="TreeGrafter"/>
</dbReference>
<dbReference type="GO" id="GO:0005774">
    <property type="term" value="C:vacuolar membrane"/>
    <property type="evidence" value="ECO:0007669"/>
    <property type="project" value="UniProtKB-SubCell"/>
</dbReference>
<dbReference type="GO" id="GO:0004177">
    <property type="term" value="F:aminopeptidase activity"/>
    <property type="evidence" value="ECO:0007669"/>
    <property type="project" value="UniProtKB-KW"/>
</dbReference>
<dbReference type="GO" id="GO:0008239">
    <property type="term" value="F:dipeptidyl-peptidase activity"/>
    <property type="evidence" value="ECO:0007669"/>
    <property type="project" value="UniProtKB-EC"/>
</dbReference>
<dbReference type="GO" id="GO:0008236">
    <property type="term" value="F:serine-type peptidase activity"/>
    <property type="evidence" value="ECO:0007669"/>
    <property type="project" value="UniProtKB-KW"/>
</dbReference>
<dbReference type="GO" id="GO:0006508">
    <property type="term" value="P:proteolysis"/>
    <property type="evidence" value="ECO:0007669"/>
    <property type="project" value="UniProtKB-KW"/>
</dbReference>
<dbReference type="FunFam" id="3.40.50.1820:FF:000003">
    <property type="entry name" value="Dipeptidyl peptidase 4"/>
    <property type="match status" value="1"/>
</dbReference>
<dbReference type="Gene3D" id="3.40.50.1820">
    <property type="entry name" value="alpha/beta hydrolase"/>
    <property type="match status" value="1"/>
</dbReference>
<dbReference type="Gene3D" id="2.140.10.30">
    <property type="entry name" value="Dipeptidylpeptidase IV, N-terminal domain"/>
    <property type="match status" value="1"/>
</dbReference>
<dbReference type="InterPro" id="IPR029058">
    <property type="entry name" value="AB_hydrolase_fold"/>
</dbReference>
<dbReference type="InterPro" id="IPR001375">
    <property type="entry name" value="Peptidase_S9_cat"/>
</dbReference>
<dbReference type="InterPro" id="IPR002469">
    <property type="entry name" value="Peptidase_S9B_N"/>
</dbReference>
<dbReference type="InterPro" id="IPR050278">
    <property type="entry name" value="Serine_Prot_S9B/DPPIV"/>
</dbReference>
<dbReference type="PANTHER" id="PTHR11731:SF200">
    <property type="entry name" value="DIPEPTIDYL PEPTIDASE 10, ISOFORM B"/>
    <property type="match status" value="1"/>
</dbReference>
<dbReference type="PANTHER" id="PTHR11731">
    <property type="entry name" value="PROTEASE FAMILY S9B,C DIPEPTIDYL-PEPTIDASE IV-RELATED"/>
    <property type="match status" value="1"/>
</dbReference>
<dbReference type="Pfam" id="PF00930">
    <property type="entry name" value="DPPIV_N"/>
    <property type="match status" value="1"/>
</dbReference>
<dbReference type="Pfam" id="PF00326">
    <property type="entry name" value="Peptidase_S9"/>
    <property type="match status" value="1"/>
</dbReference>
<dbReference type="SUPFAM" id="SSF53474">
    <property type="entry name" value="alpha/beta-Hydrolases"/>
    <property type="match status" value="1"/>
</dbReference>
<dbReference type="SUPFAM" id="SSF82171">
    <property type="entry name" value="DPP6 N-terminal domain-like"/>
    <property type="match status" value="1"/>
</dbReference>
<reference key="1">
    <citation type="submission" date="2008-07" db="EMBL/GenBank/DDBJ databases">
        <title>Annotation of Ajellomyces capsulatus strain H88.</title>
        <authorList>
            <person name="Champion M."/>
            <person name="Cuomo C."/>
            <person name="Ma L.-J."/>
            <person name="Henn M.R."/>
            <person name="Sil A."/>
            <person name="Goldman B."/>
            <person name="Young S.K."/>
            <person name="Kodira C.D."/>
            <person name="Zeng Q."/>
            <person name="Koehrsen M."/>
            <person name="Alvarado L."/>
            <person name="Berlin A."/>
            <person name="Borenstein D."/>
            <person name="Chen Z."/>
            <person name="Engels R."/>
            <person name="Freedman E."/>
            <person name="Gellesch M."/>
            <person name="Goldberg J."/>
            <person name="Griggs A."/>
            <person name="Gujja S."/>
            <person name="Heiman D."/>
            <person name="Hepburn T."/>
            <person name="Howarth C."/>
            <person name="Jen D."/>
            <person name="Larson L."/>
            <person name="Lewis B."/>
            <person name="Mehta T."/>
            <person name="Park D."/>
            <person name="Pearson M."/>
            <person name="Roberts A."/>
            <person name="Saif S."/>
            <person name="Shea T."/>
            <person name="Shenoy N."/>
            <person name="Sisk P."/>
            <person name="Stolte C."/>
            <person name="Sykes S."/>
            <person name="Walk T."/>
            <person name="White J."/>
            <person name="Yandava C."/>
            <person name="Klein B."/>
            <person name="McEwen J.G."/>
            <person name="Puccia R."/>
            <person name="Goldman G.H."/>
            <person name="Felipe M.S."/>
            <person name="Nino-Vega G."/>
            <person name="San-Blas G."/>
            <person name="Taylor J."/>
            <person name="Mendoza L."/>
            <person name="Galagan J."/>
            <person name="Nusbaum C."/>
            <person name="Birren B."/>
        </authorList>
    </citation>
    <scope>NUCLEOTIDE SEQUENCE [LARGE SCALE GENOMIC DNA]</scope>
    <source>
        <strain>H88</strain>
    </source>
</reference>
<protein>
    <recommendedName>
        <fullName>Probable dipeptidyl-aminopeptidase B</fullName>
        <shortName>DPAP B</shortName>
        <ecNumber>3.4.14.5</ecNumber>
    </recommendedName>
</protein>
<feature type="chain" id="PRO_0000412123" description="Probable dipeptidyl-aminopeptidase B">
    <location>
        <begin position="1"/>
        <end position="917"/>
    </location>
</feature>
<feature type="topological domain" description="Cytoplasmic" evidence="2">
    <location>
        <begin position="1"/>
        <end position="99"/>
    </location>
</feature>
<feature type="transmembrane region" description="Helical; Signal-anchor for type II membrane protein" evidence="2">
    <location>
        <begin position="100"/>
        <end position="120"/>
    </location>
</feature>
<feature type="topological domain" description="Vacuolar" evidence="2">
    <location>
        <begin position="121"/>
        <end position="917"/>
    </location>
</feature>
<feature type="region of interest" description="Disordered" evidence="3">
    <location>
        <begin position="1"/>
        <end position="21"/>
    </location>
</feature>
<feature type="compositionally biased region" description="Basic and acidic residues" evidence="3">
    <location>
        <begin position="1"/>
        <end position="16"/>
    </location>
</feature>
<feature type="active site" description="Charge relay system" evidence="1">
    <location>
        <position position="756"/>
    </location>
</feature>
<feature type="active site" description="Charge relay system" evidence="1">
    <location>
        <position position="833"/>
    </location>
</feature>
<feature type="active site" description="Charge relay system" evidence="1">
    <location>
        <position position="866"/>
    </location>
</feature>
<feature type="glycosylation site" description="N-linked (GlcNAc...) asparagine" evidence="2">
    <location>
        <position position="135"/>
    </location>
</feature>
<feature type="glycosylation site" description="N-linked (GlcNAc...) asparagine" evidence="2">
    <location>
        <position position="351"/>
    </location>
</feature>
<feature type="glycosylation site" description="N-linked (GlcNAc...) asparagine" evidence="2">
    <location>
        <position position="574"/>
    </location>
</feature>
<feature type="glycosylation site" description="N-linked (GlcNAc...) asparagine" evidence="2">
    <location>
        <position position="815"/>
    </location>
</feature>
<feature type="glycosylation site" description="N-linked (GlcNAc...) asparagine" evidence="2">
    <location>
        <position position="902"/>
    </location>
</feature>